<feature type="chain" id="PRO_0000351994" description="Small ribosomal subunit protein uS2">
    <location>
        <begin position="1"/>
        <end position="260"/>
    </location>
</feature>
<feature type="sequence conflict" description="In Ref. 1; CAP56963." evidence="2" ref="1">
    <original>SNSDPRGVTFPIPGNDDAIRAIALYCELVSGAVLDGISAELGASGQDFGAAEELPVDTAAEAAAAEAAPAA</original>
    <variation>RQFRSARR</variation>
    <location>
        <begin position="190"/>
        <end position="260"/>
    </location>
</feature>
<organism>
    <name type="scientific">Gluconacetobacter diazotrophicus (strain ATCC 49037 / DSM 5601 / CCUG 37298 / CIP 103539 / LMG 7603 / PAl5)</name>
    <dbReference type="NCBI Taxonomy" id="272568"/>
    <lineage>
        <taxon>Bacteria</taxon>
        <taxon>Pseudomonadati</taxon>
        <taxon>Pseudomonadota</taxon>
        <taxon>Alphaproteobacteria</taxon>
        <taxon>Acetobacterales</taxon>
        <taxon>Acetobacteraceae</taxon>
        <taxon>Gluconacetobacter</taxon>
    </lineage>
</organism>
<evidence type="ECO:0000255" key="1">
    <source>
        <dbReference type="HAMAP-Rule" id="MF_00291"/>
    </source>
</evidence>
<evidence type="ECO:0000305" key="2"/>
<keyword id="KW-1185">Reference proteome</keyword>
<keyword id="KW-0687">Ribonucleoprotein</keyword>
<keyword id="KW-0689">Ribosomal protein</keyword>
<comment type="similarity">
    <text evidence="1">Belongs to the universal ribosomal protein uS2 family.</text>
</comment>
<comment type="sequence caution" evidence="2">
    <conflict type="erroneous initiation">
        <sequence resource="EMBL-CDS" id="CAP56963"/>
    </conflict>
</comment>
<dbReference type="EMBL" id="AM889285">
    <property type="protein sequence ID" value="CAP56963.1"/>
    <property type="status" value="ALT_INIT"/>
    <property type="molecule type" value="Genomic_DNA"/>
</dbReference>
<dbReference type="EMBL" id="CP001189">
    <property type="protein sequence ID" value="ACI53074.1"/>
    <property type="molecule type" value="Genomic_DNA"/>
</dbReference>
<dbReference type="RefSeq" id="WP_012554893.1">
    <property type="nucleotide sequence ID" value="NC_011365.1"/>
</dbReference>
<dbReference type="SMR" id="A9HRQ9"/>
<dbReference type="STRING" id="272568.GDI3020"/>
<dbReference type="KEGG" id="gdi:GDI3020"/>
<dbReference type="KEGG" id="gdj:Gdia_3347"/>
<dbReference type="eggNOG" id="COG0052">
    <property type="taxonomic scope" value="Bacteria"/>
</dbReference>
<dbReference type="HOGENOM" id="CLU_040318_2_1_5"/>
<dbReference type="Proteomes" id="UP000001176">
    <property type="component" value="Chromosome"/>
</dbReference>
<dbReference type="GO" id="GO:0022627">
    <property type="term" value="C:cytosolic small ribosomal subunit"/>
    <property type="evidence" value="ECO:0007669"/>
    <property type="project" value="TreeGrafter"/>
</dbReference>
<dbReference type="GO" id="GO:0003735">
    <property type="term" value="F:structural constituent of ribosome"/>
    <property type="evidence" value="ECO:0007669"/>
    <property type="project" value="InterPro"/>
</dbReference>
<dbReference type="GO" id="GO:0006412">
    <property type="term" value="P:translation"/>
    <property type="evidence" value="ECO:0007669"/>
    <property type="project" value="UniProtKB-UniRule"/>
</dbReference>
<dbReference type="CDD" id="cd01425">
    <property type="entry name" value="RPS2"/>
    <property type="match status" value="1"/>
</dbReference>
<dbReference type="FunFam" id="1.10.287.610:FF:000001">
    <property type="entry name" value="30S ribosomal protein S2"/>
    <property type="match status" value="1"/>
</dbReference>
<dbReference type="Gene3D" id="3.40.50.10490">
    <property type="entry name" value="Glucose-6-phosphate isomerase like protein, domain 1"/>
    <property type="match status" value="1"/>
</dbReference>
<dbReference type="Gene3D" id="1.10.287.610">
    <property type="entry name" value="Helix hairpin bin"/>
    <property type="match status" value="1"/>
</dbReference>
<dbReference type="HAMAP" id="MF_00291_B">
    <property type="entry name" value="Ribosomal_uS2_B"/>
    <property type="match status" value="1"/>
</dbReference>
<dbReference type="InterPro" id="IPR001865">
    <property type="entry name" value="Ribosomal_uS2"/>
</dbReference>
<dbReference type="InterPro" id="IPR005706">
    <property type="entry name" value="Ribosomal_uS2_bac/mit/plastid"/>
</dbReference>
<dbReference type="InterPro" id="IPR018130">
    <property type="entry name" value="Ribosomal_uS2_CS"/>
</dbReference>
<dbReference type="InterPro" id="IPR023591">
    <property type="entry name" value="Ribosomal_uS2_flav_dom_sf"/>
</dbReference>
<dbReference type="NCBIfam" id="TIGR01011">
    <property type="entry name" value="rpsB_bact"/>
    <property type="match status" value="1"/>
</dbReference>
<dbReference type="PANTHER" id="PTHR12534">
    <property type="entry name" value="30S RIBOSOMAL PROTEIN S2 PROKARYOTIC AND ORGANELLAR"/>
    <property type="match status" value="1"/>
</dbReference>
<dbReference type="PANTHER" id="PTHR12534:SF0">
    <property type="entry name" value="SMALL RIBOSOMAL SUBUNIT PROTEIN US2M"/>
    <property type="match status" value="1"/>
</dbReference>
<dbReference type="Pfam" id="PF00318">
    <property type="entry name" value="Ribosomal_S2"/>
    <property type="match status" value="1"/>
</dbReference>
<dbReference type="PRINTS" id="PR00395">
    <property type="entry name" value="RIBOSOMALS2"/>
</dbReference>
<dbReference type="SUPFAM" id="SSF52313">
    <property type="entry name" value="Ribosomal protein S2"/>
    <property type="match status" value="1"/>
</dbReference>
<dbReference type="PROSITE" id="PS00962">
    <property type="entry name" value="RIBOSOMAL_S2_1"/>
    <property type="match status" value="1"/>
</dbReference>
<dbReference type="PROSITE" id="PS00963">
    <property type="entry name" value="RIBOSOMAL_S2_2"/>
    <property type="match status" value="1"/>
</dbReference>
<sequence>MAMPDFTMRQLLEAGVHFGHHTRRWNPRMAPFLFGVRNQVHIIDLQQTVPMLDRALKAIRDTVAGGGRVLFVGTKRAAADQIAEAAKRSGQYYVNHRWLGGMLTNWKTITGSIKRLRQIDDMLTGDTHGLTKKEILDITRNREKLERSLGGIKEMGGLPDILFVIDTNKEKLAVEEANKLGIPVVAILDSNSDPRGVTFPIPGNDDAIRAIALYCELVSGAVLDGISAELGASGQDFGAAEELPVDTAAEAAAAEAAPAA</sequence>
<name>RS2_GLUDA</name>
<accession>A9HRQ9</accession>
<accession>B5ZLD2</accession>
<reference key="1">
    <citation type="journal article" date="2009" name="BMC Genomics">
        <title>Complete genome sequence of the sugarcane nitrogen-fixing endophyte Gluconacetobacter diazotrophicus Pal5.</title>
        <authorList>
            <person name="Bertalan M."/>
            <person name="Albano R."/>
            <person name="de Padua V."/>
            <person name="Rouws L."/>
            <person name="Rojas C."/>
            <person name="Hemerly A."/>
            <person name="Teixeira K."/>
            <person name="Schwab S."/>
            <person name="Araujo J."/>
            <person name="Oliveira A."/>
            <person name="Franca L."/>
            <person name="Magalhaes V."/>
            <person name="Alqueres S."/>
            <person name="Cardoso A."/>
            <person name="Almeida W."/>
            <person name="Loureiro M.M."/>
            <person name="Nogueira E."/>
            <person name="Cidade D."/>
            <person name="Oliveira D."/>
            <person name="Simao T."/>
            <person name="Macedo J."/>
            <person name="Valadao A."/>
            <person name="Dreschsel M."/>
            <person name="Freitas F."/>
            <person name="Vidal M."/>
            <person name="Guedes H."/>
            <person name="Rodrigues E."/>
            <person name="Meneses C."/>
            <person name="Brioso P."/>
            <person name="Pozzer L."/>
            <person name="Figueiredo D."/>
            <person name="Montano H."/>
            <person name="Junior J."/>
            <person name="de Souza Filho G."/>
            <person name="Martin Quintana Flores V."/>
            <person name="Ferreira B."/>
            <person name="Branco A."/>
            <person name="Gonzalez P."/>
            <person name="Guillobel H."/>
            <person name="Lemos M."/>
            <person name="Seibel L."/>
            <person name="Macedo J."/>
            <person name="Alves-Ferreira M."/>
            <person name="Sachetto-Martins G."/>
            <person name="Coelho A."/>
            <person name="Santos E."/>
            <person name="Amaral G."/>
            <person name="Neves A."/>
            <person name="Pacheco A.B."/>
            <person name="Carvalho D."/>
            <person name="Lery L."/>
            <person name="Bisch P."/>
            <person name="Rossle S.C."/>
            <person name="Urmenyi T."/>
            <person name="Rael Pereira A."/>
            <person name="Silva R."/>
            <person name="Rondinelli E."/>
            <person name="von Kruger W."/>
            <person name="Martins O."/>
            <person name="Baldani J.I."/>
            <person name="Ferreira P.C."/>
        </authorList>
    </citation>
    <scope>NUCLEOTIDE SEQUENCE [LARGE SCALE GENOMIC DNA]</scope>
    <source>
        <strain>ATCC 49037 / DSM 5601 / CCUG 37298 / CIP 103539 / LMG 7603 / PAl5</strain>
    </source>
</reference>
<reference key="2">
    <citation type="journal article" date="2010" name="Stand. Genomic Sci.">
        <title>Two genome sequences of the same bacterial strain, Gluconacetobacter diazotrophicus PAl 5, suggest a new standard in genome sequence submission.</title>
        <authorList>
            <person name="Giongo A."/>
            <person name="Tyler H.L."/>
            <person name="Zipperer U.N."/>
            <person name="Triplett E.W."/>
        </authorList>
    </citation>
    <scope>NUCLEOTIDE SEQUENCE [LARGE SCALE GENOMIC DNA]</scope>
    <source>
        <strain>ATCC 49037 / DSM 5601 / CCUG 37298 / CIP 103539 / LMG 7603 / PAl5</strain>
    </source>
</reference>
<gene>
    <name evidence="1" type="primary">rpsB</name>
    <name type="ordered locus">GDI3020</name>
    <name type="ordered locus">Gdia_3347</name>
</gene>
<protein>
    <recommendedName>
        <fullName evidence="1">Small ribosomal subunit protein uS2</fullName>
    </recommendedName>
    <alternativeName>
        <fullName evidence="2">30S ribosomal protein S2</fullName>
    </alternativeName>
</protein>
<proteinExistence type="inferred from homology"/>